<comment type="function">
    <text evidence="9 10">Component of the mitochondrial ribosome (mitoribosome), a dedicated translation machinery responsible for the synthesis of mitochondrial genome-encoded proteins, including at least some of the essential transmembrane subunits of the mitochondrial respiratory chain. The mitoribosomes are attached to the mitochondrial inner membrane and translation products are cotranslationally integrated into the membrane.</text>
</comment>
<comment type="subunit">
    <text evidence="3 6">Component of the mitochondrial small ribosomal subunit (mt-SSU). Mature yeast 74S mitochondrial ribosomes consist of a small (37S) and a large (54S) subunit. The 37S small subunit contains a 15S ribosomal RNA (15S mt-rRNA) and 34 different proteins. The 54S large subunit contains a 21S rRNA (21S mt-rRNA) and 46 different proteins.</text>
</comment>
<comment type="subcellular location">
    <subcellularLocation>
        <location evidence="3 4">Mitochondrion</location>
    </subcellularLocation>
    <text evidence="5">Mitoribosomes are tethered to the mitochondrial inner membrane and spatially aligned with the membrane insertion machinery through two distinct membrane contact sites, formed by the 21S rRNA expansion segment 96-ES1 and the inner membrane protein MBA1.</text>
</comment>
<comment type="similarity">
    <text evidence="8">Belongs to the mitochondrion-specific ribosomal protein mS46 family.</text>
</comment>
<reference key="1">
    <citation type="journal article" date="2005" name="Eukaryot. Cell">
        <title>Alteration of a novel dispensable mitochondrial ribosomal small-subunit protein, Rsm28p, allows translation of defective COX2 mRNAs.</title>
        <authorList>
            <person name="Williams E.H."/>
            <person name="Bsat N."/>
            <person name="Bonnefoy N."/>
            <person name="Butler C.A."/>
            <person name="Fox T.D."/>
        </authorList>
    </citation>
    <scope>NUCLEOTIDE SEQUENCE [GENOMIC DNA]</scope>
    <scope>MUTAGENESIS OF 121-PRO--GLN-187</scope>
    <scope>SUBUNIT</scope>
    <scope>SUBCELLULAR LOCATION</scope>
</reference>
<reference key="2">
    <citation type="journal article" date="1997" name="Nature">
        <title>The nucleotide sequence of Saccharomyces cerevisiae chromosome IV.</title>
        <authorList>
            <person name="Jacq C."/>
            <person name="Alt-Moerbe J."/>
            <person name="Andre B."/>
            <person name="Arnold W."/>
            <person name="Bahr A."/>
            <person name="Ballesta J.P.G."/>
            <person name="Bargues M."/>
            <person name="Baron L."/>
            <person name="Becker A."/>
            <person name="Biteau N."/>
            <person name="Bloecker H."/>
            <person name="Blugeon C."/>
            <person name="Boskovic J."/>
            <person name="Brandt P."/>
            <person name="Brueckner M."/>
            <person name="Buitrago M.J."/>
            <person name="Coster F."/>
            <person name="Delaveau T."/>
            <person name="del Rey F."/>
            <person name="Dujon B."/>
            <person name="Eide L.G."/>
            <person name="Garcia-Cantalejo J.M."/>
            <person name="Goffeau A."/>
            <person name="Gomez-Peris A."/>
            <person name="Granotier C."/>
            <person name="Hanemann V."/>
            <person name="Hankeln T."/>
            <person name="Hoheisel J.D."/>
            <person name="Jaeger W."/>
            <person name="Jimenez A."/>
            <person name="Jonniaux J.-L."/>
            <person name="Kraemer C."/>
            <person name="Kuester H."/>
            <person name="Laamanen P."/>
            <person name="Legros Y."/>
            <person name="Louis E.J."/>
            <person name="Moeller-Rieker S."/>
            <person name="Monnet A."/>
            <person name="Moro M."/>
            <person name="Mueller-Auer S."/>
            <person name="Nussbaumer B."/>
            <person name="Paricio N."/>
            <person name="Paulin L."/>
            <person name="Perea J."/>
            <person name="Perez-Alonso M."/>
            <person name="Perez-Ortin J.E."/>
            <person name="Pohl T.M."/>
            <person name="Prydz H."/>
            <person name="Purnelle B."/>
            <person name="Rasmussen S.W."/>
            <person name="Remacha M.A."/>
            <person name="Revuelta J.L."/>
            <person name="Rieger M."/>
            <person name="Salom D."/>
            <person name="Saluz H.P."/>
            <person name="Saiz J.E."/>
            <person name="Saren A.-M."/>
            <person name="Schaefer M."/>
            <person name="Scharfe M."/>
            <person name="Schmidt E.R."/>
            <person name="Schneider C."/>
            <person name="Scholler P."/>
            <person name="Schwarz S."/>
            <person name="Soler-Mira A."/>
            <person name="Urrestarazu L.A."/>
            <person name="Verhasselt P."/>
            <person name="Vissers S."/>
            <person name="Voet M."/>
            <person name="Volckaert G."/>
            <person name="Wagner G."/>
            <person name="Wambutt R."/>
            <person name="Wedler E."/>
            <person name="Wedler H."/>
            <person name="Woelfl S."/>
            <person name="Harris D.E."/>
            <person name="Bowman S."/>
            <person name="Brown D."/>
            <person name="Churcher C.M."/>
            <person name="Connor R."/>
            <person name="Dedman K."/>
            <person name="Gentles S."/>
            <person name="Hamlin N."/>
            <person name="Hunt S."/>
            <person name="Jones L."/>
            <person name="McDonald S."/>
            <person name="Murphy L.D."/>
            <person name="Niblett D."/>
            <person name="Odell C."/>
            <person name="Oliver K."/>
            <person name="Rajandream M.A."/>
            <person name="Richards C."/>
            <person name="Shore L."/>
            <person name="Walsh S.V."/>
            <person name="Barrell B.G."/>
            <person name="Dietrich F.S."/>
            <person name="Mulligan J.T."/>
            <person name="Allen E."/>
            <person name="Araujo R."/>
            <person name="Aviles E."/>
            <person name="Berno A."/>
            <person name="Carpenter J."/>
            <person name="Chen E."/>
            <person name="Cherry J.M."/>
            <person name="Chung E."/>
            <person name="Duncan M."/>
            <person name="Hunicke-Smith S."/>
            <person name="Hyman R.W."/>
            <person name="Komp C."/>
            <person name="Lashkari D."/>
            <person name="Lew H."/>
            <person name="Lin D."/>
            <person name="Mosedale D."/>
            <person name="Nakahara K."/>
            <person name="Namath A."/>
            <person name="Oefner P."/>
            <person name="Oh C."/>
            <person name="Petel F.X."/>
            <person name="Roberts D."/>
            <person name="Schramm S."/>
            <person name="Schroeder M."/>
            <person name="Shogren T."/>
            <person name="Shroff N."/>
            <person name="Winant A."/>
            <person name="Yelton M.A."/>
            <person name="Botstein D."/>
            <person name="Davis R.W."/>
            <person name="Johnston M."/>
            <person name="Andrews S."/>
            <person name="Brinkman R."/>
            <person name="Cooper J."/>
            <person name="Ding H."/>
            <person name="Du Z."/>
            <person name="Favello A."/>
            <person name="Fulton L."/>
            <person name="Gattung S."/>
            <person name="Greco T."/>
            <person name="Hallsworth K."/>
            <person name="Hawkins J."/>
            <person name="Hillier L.W."/>
            <person name="Jier M."/>
            <person name="Johnson D."/>
            <person name="Johnston L."/>
            <person name="Kirsten J."/>
            <person name="Kucaba T."/>
            <person name="Langston Y."/>
            <person name="Latreille P."/>
            <person name="Le T."/>
            <person name="Mardis E."/>
            <person name="Menezes S."/>
            <person name="Miller N."/>
            <person name="Nhan M."/>
            <person name="Pauley A."/>
            <person name="Peluso D."/>
            <person name="Rifkin L."/>
            <person name="Riles L."/>
            <person name="Taich A."/>
            <person name="Trevaskis E."/>
            <person name="Vignati D."/>
            <person name="Wilcox L."/>
            <person name="Wohldman P."/>
            <person name="Vaudin M."/>
            <person name="Wilson R."/>
            <person name="Waterston R."/>
            <person name="Albermann K."/>
            <person name="Hani J."/>
            <person name="Heumann K."/>
            <person name="Kleine K."/>
            <person name="Mewes H.-W."/>
            <person name="Zollner A."/>
            <person name="Zaccaria P."/>
        </authorList>
    </citation>
    <scope>NUCLEOTIDE SEQUENCE [LARGE SCALE GENOMIC DNA]</scope>
    <source>
        <strain>ATCC 204508 / S288c</strain>
    </source>
</reference>
<reference key="3">
    <citation type="submission" date="2002-12" db="EMBL/GenBank/DDBJ databases">
        <authorList>
            <person name="Sethuraman A."/>
            <person name="Dolinski K.J."/>
        </authorList>
    </citation>
    <scope>SEQUENCE REVISION</scope>
</reference>
<reference key="4">
    <citation type="journal article" date="2014" name="G3 (Bethesda)">
        <title>The reference genome sequence of Saccharomyces cerevisiae: Then and now.</title>
        <authorList>
            <person name="Engel S.R."/>
            <person name="Dietrich F.S."/>
            <person name="Fisk D.G."/>
            <person name="Binkley G."/>
            <person name="Balakrishnan R."/>
            <person name="Costanzo M.C."/>
            <person name="Dwight S.S."/>
            <person name="Hitz B.C."/>
            <person name="Karra K."/>
            <person name="Nash R.S."/>
            <person name="Weng S."/>
            <person name="Wong E.D."/>
            <person name="Lloyd P."/>
            <person name="Skrzypek M.S."/>
            <person name="Miyasato S.R."/>
            <person name="Simison M."/>
            <person name="Cherry J.M."/>
        </authorList>
    </citation>
    <scope>GENOME REANNOTATION</scope>
    <source>
        <strain>ATCC 204508 / S288c</strain>
    </source>
</reference>
<reference key="5">
    <citation type="journal article" date="2006" name="J. Proteome Res.">
        <title>Toward the complete yeast mitochondrial proteome: multidimensional separation techniques for mitochondrial proteomics.</title>
        <authorList>
            <person name="Reinders J."/>
            <person name="Zahedi R.P."/>
            <person name="Pfanner N."/>
            <person name="Meisinger C."/>
            <person name="Sickmann A."/>
        </authorList>
    </citation>
    <scope>SUBCELLULAR LOCATION [LARGE SCALE ANALYSIS]</scope>
    <scope>IDENTIFICATION BY MASS SPECTROMETRY</scope>
</reference>
<reference key="6">
    <citation type="journal article" date="2015" name="Nat. Commun.">
        <title>Organization of the mitochondrial translation machinery studied in situ by cryoelectron tomography.</title>
        <authorList>
            <person name="Pfeffer S."/>
            <person name="Woellhaf M.W."/>
            <person name="Herrmann J.M."/>
            <person name="Forster F."/>
        </authorList>
    </citation>
    <scope>SUBCELLULAR LOCATION</scope>
</reference>
<reference key="7">
    <citation type="journal article" date="2017" name="Science">
        <title>The structure of the yeast mitochondrial ribosome.</title>
        <authorList>
            <person name="Desai N."/>
            <person name="Brown A."/>
            <person name="Amunts A."/>
            <person name="Ramakrishnan V."/>
        </authorList>
    </citation>
    <scope>STRUCTURE BY ELECTRON MICROSCOPY (3.25 ANGSTROMS)</scope>
    <scope>SUBUNIT</scope>
</reference>
<feature type="transit peptide" description="Mitochondrion" evidence="1">
    <location>
        <begin position="1"/>
        <end position="14"/>
    </location>
</feature>
<feature type="chain" id="PRO_0000269654" description="Small ribosomal subunit protein mS46">
    <location>
        <begin position="15"/>
        <end position="361"/>
    </location>
</feature>
<feature type="region of interest" description="Disordered" evidence="2">
    <location>
        <begin position="37"/>
        <end position="99"/>
    </location>
</feature>
<feature type="compositionally biased region" description="Basic and acidic residues" evidence="2">
    <location>
        <begin position="43"/>
        <end position="52"/>
    </location>
</feature>
<feature type="compositionally biased region" description="Low complexity" evidence="2">
    <location>
        <begin position="59"/>
        <end position="68"/>
    </location>
</feature>
<feature type="compositionally biased region" description="Basic and acidic residues" evidence="2">
    <location>
        <begin position="69"/>
        <end position="91"/>
    </location>
</feature>
<feature type="mutagenesis site" description="In RSM28-1; allows translation of defective COX2 mRNAs." evidence="3">
    <location>
        <begin position="121"/>
        <end position="187"/>
    </location>
</feature>
<accession>Q03430</accession>
<accession>D6VTB6</accession>
<accession>Q8X184</accession>
<accession>Q8X185</accession>
<keyword id="KW-0002">3D-structure</keyword>
<keyword id="KW-0496">Mitochondrion</keyword>
<keyword id="KW-1185">Reference proteome</keyword>
<keyword id="KW-0687">Ribonucleoprotein</keyword>
<keyword id="KW-0689">Ribosomal protein</keyword>
<keyword id="KW-0809">Transit peptide</keyword>
<protein>
    <recommendedName>
        <fullName evidence="7">Small ribosomal subunit protein mS46</fullName>
    </recommendedName>
    <alternativeName>
        <fullName>37S ribosomal protein RSM28, mitochondrial</fullName>
    </alternativeName>
</protein>
<proteinExistence type="evidence at protein level"/>
<evidence type="ECO:0000255" key="1"/>
<evidence type="ECO:0000256" key="2">
    <source>
        <dbReference type="SAM" id="MobiDB-lite"/>
    </source>
</evidence>
<evidence type="ECO:0000269" key="3">
    <source>
    </source>
</evidence>
<evidence type="ECO:0000269" key="4">
    <source>
    </source>
</evidence>
<evidence type="ECO:0000269" key="5">
    <source>
    </source>
</evidence>
<evidence type="ECO:0000269" key="6">
    <source>
    </source>
</evidence>
<evidence type="ECO:0000303" key="7">
    <source>
    </source>
</evidence>
<evidence type="ECO:0000305" key="8"/>
<evidence type="ECO:0000305" key="9">
    <source>
    </source>
</evidence>
<evidence type="ECO:0000305" key="10">
    <source>
    </source>
</evidence>
<gene>
    <name type="primary">RSM28</name>
    <name type="ordered locus">YDR494W</name>
</gene>
<name>RSM28_YEAST</name>
<sequence length="361" mass="41216">MRSSMFRCVSRAHYSTSVTEDFINSILARAQEATAKASSNALKLDKMKEGRMQNKRRNGNQNRNSMNNKESRGREGNQGERNMRLKNRSSDSVRANKQQWNKGANTSFVKNPTGNTVVMQPQFKKMQNGKNNLKGDARVEDDLLDVFNSSMEQKPVNFNGTPKSKARFQKKSHILTASKRRKAPQQQLQKVIKRPVSSEYVLEEPTPLSLLEYTPQVFPTKESRLVNFTLDSLKKSNYPIYRSPNLGILKVHDFTLNTPNFGKYTPGSSLIFAKEPQLQNLLIEEDPEDFHRQVTGEYQLLKPYVKKDFEKLTKSKDTVSKLVQNSQVVRLSLQSVVMGSEEKKLVYDVCSGMKPISELQQ</sequence>
<dbReference type="EMBL" id="AF459095">
    <property type="protein sequence ID" value="AAL69895.1"/>
    <property type="molecule type" value="Genomic_DNA"/>
</dbReference>
<dbReference type="EMBL" id="AF459096">
    <property type="protein sequence ID" value="AAL69896.1"/>
    <property type="molecule type" value="Genomic_DNA"/>
</dbReference>
<dbReference type="EMBL" id="U33050">
    <property type="protein sequence ID" value="AAB64915.2"/>
    <property type="molecule type" value="Genomic_DNA"/>
</dbReference>
<dbReference type="EMBL" id="BK006938">
    <property type="protein sequence ID" value="DAA12326.1"/>
    <property type="molecule type" value="Genomic_DNA"/>
</dbReference>
<dbReference type="PIR" id="S69661">
    <property type="entry name" value="S69661"/>
</dbReference>
<dbReference type="RefSeq" id="NP_010782.4">
    <property type="nucleotide sequence ID" value="NM_001180802.3"/>
</dbReference>
<dbReference type="PDB" id="5MRC">
    <property type="method" value="EM"/>
    <property type="resolution" value="3.25 A"/>
    <property type="chains" value="77=197-361"/>
</dbReference>
<dbReference type="PDB" id="5MRE">
    <property type="method" value="EM"/>
    <property type="resolution" value="3.75 A"/>
    <property type="chains" value="77=197-361"/>
</dbReference>
<dbReference type="PDB" id="5MRF">
    <property type="method" value="EM"/>
    <property type="resolution" value="4.97 A"/>
    <property type="chains" value="77=197-361"/>
</dbReference>
<dbReference type="PDBsum" id="5MRC"/>
<dbReference type="PDBsum" id="5MRE"/>
<dbReference type="PDBsum" id="5MRF"/>
<dbReference type="EMDB" id="EMD-3551"/>
<dbReference type="EMDB" id="EMD-3552"/>
<dbReference type="EMDB" id="EMD-3553"/>
<dbReference type="SMR" id="Q03430"/>
<dbReference type="BioGRID" id="32545">
    <property type="interactions" value="257"/>
</dbReference>
<dbReference type="ComplexPortal" id="CPX-1603">
    <property type="entry name" value="37S mitochondrial small ribosomal subunit"/>
</dbReference>
<dbReference type="DIP" id="DIP-3923N"/>
<dbReference type="FunCoup" id="Q03430">
    <property type="interactions" value="126"/>
</dbReference>
<dbReference type="IntAct" id="Q03430">
    <property type="interactions" value="36"/>
</dbReference>
<dbReference type="MINT" id="Q03430"/>
<dbReference type="STRING" id="4932.YDR494W"/>
<dbReference type="iPTMnet" id="Q03430"/>
<dbReference type="PaxDb" id="4932-YDR494W"/>
<dbReference type="PeptideAtlas" id="Q03430"/>
<dbReference type="EnsemblFungi" id="YDR494W_mRNA">
    <property type="protein sequence ID" value="YDR494W"/>
    <property type="gene ID" value="YDR494W"/>
</dbReference>
<dbReference type="GeneID" id="852105"/>
<dbReference type="KEGG" id="sce:YDR494W"/>
<dbReference type="AGR" id="SGD:S000002902"/>
<dbReference type="SGD" id="S000002902">
    <property type="gene designation" value="RSM28"/>
</dbReference>
<dbReference type="VEuPathDB" id="FungiDB:YDR494W"/>
<dbReference type="eggNOG" id="ENOG502S2AE">
    <property type="taxonomic scope" value="Eukaryota"/>
</dbReference>
<dbReference type="HOGENOM" id="CLU_071897_0_0_1"/>
<dbReference type="InParanoid" id="Q03430"/>
<dbReference type="OMA" id="KPWINAN"/>
<dbReference type="OrthoDB" id="4049658at2759"/>
<dbReference type="BioCyc" id="YEAST:G3O-30017-MONOMER"/>
<dbReference type="BioGRID-ORCS" id="852105">
    <property type="hits" value="0 hits in 10 CRISPR screens"/>
</dbReference>
<dbReference type="PRO" id="PR:Q03430"/>
<dbReference type="Proteomes" id="UP000002311">
    <property type="component" value="Chromosome IV"/>
</dbReference>
<dbReference type="RNAct" id="Q03430">
    <property type="molecule type" value="protein"/>
</dbReference>
<dbReference type="GO" id="GO:0005743">
    <property type="term" value="C:mitochondrial inner membrane"/>
    <property type="evidence" value="ECO:0000303"/>
    <property type="project" value="ComplexPortal"/>
</dbReference>
<dbReference type="GO" id="GO:0005763">
    <property type="term" value="C:mitochondrial small ribosomal subunit"/>
    <property type="evidence" value="ECO:0000314"/>
    <property type="project" value="SGD"/>
</dbReference>
<dbReference type="GO" id="GO:0005739">
    <property type="term" value="C:mitochondrion"/>
    <property type="evidence" value="ECO:0007005"/>
    <property type="project" value="SGD"/>
</dbReference>
<dbReference type="GO" id="GO:0003735">
    <property type="term" value="F:structural constituent of ribosome"/>
    <property type="evidence" value="ECO:0000314"/>
    <property type="project" value="SGD"/>
</dbReference>
<dbReference type="GO" id="GO:0032543">
    <property type="term" value="P:mitochondrial translation"/>
    <property type="evidence" value="ECO:0000303"/>
    <property type="project" value="ComplexPortal"/>
</dbReference>
<dbReference type="GO" id="GO:0070124">
    <property type="term" value="P:mitochondrial translational initiation"/>
    <property type="evidence" value="ECO:0000316"/>
    <property type="project" value="SGD"/>
</dbReference>
<organism>
    <name type="scientific">Saccharomyces cerevisiae (strain ATCC 204508 / S288c)</name>
    <name type="common">Baker's yeast</name>
    <dbReference type="NCBI Taxonomy" id="559292"/>
    <lineage>
        <taxon>Eukaryota</taxon>
        <taxon>Fungi</taxon>
        <taxon>Dikarya</taxon>
        <taxon>Ascomycota</taxon>
        <taxon>Saccharomycotina</taxon>
        <taxon>Saccharomycetes</taxon>
        <taxon>Saccharomycetales</taxon>
        <taxon>Saccharomycetaceae</taxon>
        <taxon>Saccharomyces</taxon>
    </lineage>
</organism>